<proteinExistence type="inferred from homology"/>
<reference key="1">
    <citation type="journal article" date="2007" name="J. Bacteriol.">
        <title>The complete genome sequence of Roseobacter denitrificans reveals a mixotrophic rather than photosynthetic metabolism.</title>
        <authorList>
            <person name="Swingley W.D."/>
            <person name="Sadekar S."/>
            <person name="Mastrian S.D."/>
            <person name="Matthies H.J."/>
            <person name="Hao J."/>
            <person name="Ramos H."/>
            <person name="Acharya C.R."/>
            <person name="Conrad A.L."/>
            <person name="Taylor H.L."/>
            <person name="Dejesa L.C."/>
            <person name="Shah M.K."/>
            <person name="O'Huallachain M.E."/>
            <person name="Lince M.T."/>
            <person name="Blankenship R.E."/>
            <person name="Beatty J.T."/>
            <person name="Touchman J.W."/>
        </authorList>
    </citation>
    <scope>NUCLEOTIDE SEQUENCE [LARGE SCALE GENOMIC DNA]</scope>
    <source>
        <strain>ATCC 33942 / OCh 114</strain>
    </source>
</reference>
<name>MDH_ROSDO</name>
<evidence type="ECO:0000255" key="1">
    <source>
        <dbReference type="HAMAP-Rule" id="MF_00487"/>
    </source>
</evidence>
<accession>Q169U9</accession>
<organism>
    <name type="scientific">Roseobacter denitrificans (strain ATCC 33942 / OCh 114)</name>
    <name type="common">Erythrobacter sp. (strain OCh 114)</name>
    <name type="synonym">Roseobacter denitrificans</name>
    <dbReference type="NCBI Taxonomy" id="375451"/>
    <lineage>
        <taxon>Bacteria</taxon>
        <taxon>Pseudomonadati</taxon>
        <taxon>Pseudomonadota</taxon>
        <taxon>Alphaproteobacteria</taxon>
        <taxon>Rhodobacterales</taxon>
        <taxon>Roseobacteraceae</taxon>
        <taxon>Roseobacter</taxon>
    </lineage>
</organism>
<gene>
    <name evidence="1" type="primary">mdh</name>
    <name type="ordered locus">RD1_1617</name>
</gene>
<protein>
    <recommendedName>
        <fullName evidence="1">Malate dehydrogenase</fullName>
        <ecNumber evidence="1">1.1.1.37</ecNumber>
    </recommendedName>
</protein>
<keyword id="KW-0520">NAD</keyword>
<keyword id="KW-0560">Oxidoreductase</keyword>
<keyword id="KW-1185">Reference proteome</keyword>
<keyword id="KW-0816">Tricarboxylic acid cycle</keyword>
<feature type="chain" id="PRO_1000026492" description="Malate dehydrogenase">
    <location>
        <begin position="1"/>
        <end position="320"/>
    </location>
</feature>
<feature type="active site" description="Proton acceptor" evidence="1">
    <location>
        <position position="176"/>
    </location>
</feature>
<feature type="binding site" evidence="1">
    <location>
        <begin position="10"/>
        <end position="15"/>
    </location>
    <ligand>
        <name>NAD(+)</name>
        <dbReference type="ChEBI" id="CHEBI:57540"/>
    </ligand>
</feature>
<feature type="binding site" evidence="1">
    <location>
        <position position="34"/>
    </location>
    <ligand>
        <name>NAD(+)</name>
        <dbReference type="ChEBI" id="CHEBI:57540"/>
    </ligand>
</feature>
<feature type="binding site" evidence="1">
    <location>
        <position position="83"/>
    </location>
    <ligand>
        <name>substrate</name>
    </ligand>
</feature>
<feature type="binding site" evidence="1">
    <location>
        <position position="89"/>
    </location>
    <ligand>
        <name>substrate</name>
    </ligand>
</feature>
<feature type="binding site" evidence="1">
    <location>
        <position position="96"/>
    </location>
    <ligand>
        <name>NAD(+)</name>
        <dbReference type="ChEBI" id="CHEBI:57540"/>
    </ligand>
</feature>
<feature type="binding site" evidence="1">
    <location>
        <begin position="119"/>
        <end position="121"/>
    </location>
    <ligand>
        <name>NAD(+)</name>
        <dbReference type="ChEBI" id="CHEBI:57540"/>
    </ligand>
</feature>
<feature type="binding site" evidence="1">
    <location>
        <position position="121"/>
    </location>
    <ligand>
        <name>substrate</name>
    </ligand>
</feature>
<feature type="binding site" evidence="1">
    <location>
        <position position="152"/>
    </location>
    <ligand>
        <name>substrate</name>
    </ligand>
</feature>
<sequence length="320" mass="33507">MARPKIALIGAGQIGGTLAHLAALKELGDVVLFDIAEGIPEGKALDIAESGPSAKFDARMSGTQSYADIAGADVCIVTAGVARKPGMSRDDLLGINLKVMKSVGEGIAAHAPNAFVICITNPLDAMVWALREFSGLPHEKVCGMAGVLDSARFRHFLADEFDVSMKDVTAFVLGGHGDTMVPLVRYSTVAGIPLPDLVKMGWTTQDKLDAIVQRTRDGGAEIVGLLKTGSAFYAPATSAIEMAESYLKDQKRVLPCAAYVDGAYGLKGFYVGVPTVIGAGGVERVVEISMNKDEQAMFDNSVNAVKGLVAACKGIDDSLS</sequence>
<comment type="function">
    <text evidence="1">Catalyzes the reversible oxidation of malate to oxaloacetate.</text>
</comment>
<comment type="catalytic activity">
    <reaction evidence="1">
        <text>(S)-malate + NAD(+) = oxaloacetate + NADH + H(+)</text>
        <dbReference type="Rhea" id="RHEA:21432"/>
        <dbReference type="ChEBI" id="CHEBI:15378"/>
        <dbReference type="ChEBI" id="CHEBI:15589"/>
        <dbReference type="ChEBI" id="CHEBI:16452"/>
        <dbReference type="ChEBI" id="CHEBI:57540"/>
        <dbReference type="ChEBI" id="CHEBI:57945"/>
        <dbReference type="EC" id="1.1.1.37"/>
    </reaction>
</comment>
<comment type="similarity">
    <text evidence="1">Belongs to the LDH/MDH superfamily. MDH type 3 family.</text>
</comment>
<dbReference type="EC" id="1.1.1.37" evidence="1"/>
<dbReference type="EMBL" id="CP000362">
    <property type="protein sequence ID" value="ABG31244.1"/>
    <property type="molecule type" value="Genomic_DNA"/>
</dbReference>
<dbReference type="RefSeq" id="WP_011567864.1">
    <property type="nucleotide sequence ID" value="NC_008209.1"/>
</dbReference>
<dbReference type="SMR" id="Q169U9"/>
<dbReference type="STRING" id="375451.RD1_1617"/>
<dbReference type="KEGG" id="rde:RD1_1617"/>
<dbReference type="eggNOG" id="COG0039">
    <property type="taxonomic scope" value="Bacteria"/>
</dbReference>
<dbReference type="HOGENOM" id="CLU_045401_2_1_5"/>
<dbReference type="OrthoDB" id="9802969at2"/>
<dbReference type="Proteomes" id="UP000007029">
    <property type="component" value="Chromosome"/>
</dbReference>
<dbReference type="GO" id="GO:0004459">
    <property type="term" value="F:L-lactate dehydrogenase activity"/>
    <property type="evidence" value="ECO:0007669"/>
    <property type="project" value="TreeGrafter"/>
</dbReference>
<dbReference type="GO" id="GO:0030060">
    <property type="term" value="F:L-malate dehydrogenase (NAD+) activity"/>
    <property type="evidence" value="ECO:0007669"/>
    <property type="project" value="UniProtKB-UniRule"/>
</dbReference>
<dbReference type="GO" id="GO:0006089">
    <property type="term" value="P:lactate metabolic process"/>
    <property type="evidence" value="ECO:0007669"/>
    <property type="project" value="TreeGrafter"/>
</dbReference>
<dbReference type="GO" id="GO:0006099">
    <property type="term" value="P:tricarboxylic acid cycle"/>
    <property type="evidence" value="ECO:0007669"/>
    <property type="project" value="UniProtKB-UniRule"/>
</dbReference>
<dbReference type="CDD" id="cd01339">
    <property type="entry name" value="LDH-like_MDH"/>
    <property type="match status" value="1"/>
</dbReference>
<dbReference type="FunFam" id="3.40.50.720:FF:000018">
    <property type="entry name" value="Malate dehydrogenase"/>
    <property type="match status" value="1"/>
</dbReference>
<dbReference type="FunFam" id="3.90.110.10:FF:000004">
    <property type="entry name" value="Malate dehydrogenase"/>
    <property type="match status" value="1"/>
</dbReference>
<dbReference type="Gene3D" id="3.90.110.10">
    <property type="entry name" value="Lactate dehydrogenase/glycoside hydrolase, family 4, C-terminal"/>
    <property type="match status" value="1"/>
</dbReference>
<dbReference type="Gene3D" id="3.40.50.720">
    <property type="entry name" value="NAD(P)-binding Rossmann-like Domain"/>
    <property type="match status" value="1"/>
</dbReference>
<dbReference type="HAMAP" id="MF_00487">
    <property type="entry name" value="Malate_dehydrog_3"/>
    <property type="match status" value="1"/>
</dbReference>
<dbReference type="InterPro" id="IPR001557">
    <property type="entry name" value="L-lactate/malate_DH"/>
</dbReference>
<dbReference type="InterPro" id="IPR022383">
    <property type="entry name" value="Lactate/malate_DH_C"/>
</dbReference>
<dbReference type="InterPro" id="IPR001236">
    <property type="entry name" value="Lactate/malate_DH_N"/>
</dbReference>
<dbReference type="InterPro" id="IPR015955">
    <property type="entry name" value="Lactate_DH/Glyco_Ohase_4_C"/>
</dbReference>
<dbReference type="InterPro" id="IPR011275">
    <property type="entry name" value="Malate_DH_type3"/>
</dbReference>
<dbReference type="InterPro" id="IPR036291">
    <property type="entry name" value="NAD(P)-bd_dom_sf"/>
</dbReference>
<dbReference type="NCBIfam" id="TIGR01763">
    <property type="entry name" value="MalateDH_bact"/>
    <property type="match status" value="1"/>
</dbReference>
<dbReference type="NCBIfam" id="NF004863">
    <property type="entry name" value="PRK06223.1"/>
    <property type="match status" value="1"/>
</dbReference>
<dbReference type="PANTHER" id="PTHR43128">
    <property type="entry name" value="L-2-HYDROXYCARBOXYLATE DEHYDROGENASE (NAD(P)(+))"/>
    <property type="match status" value="1"/>
</dbReference>
<dbReference type="PANTHER" id="PTHR43128:SF16">
    <property type="entry name" value="L-LACTATE DEHYDROGENASE"/>
    <property type="match status" value="1"/>
</dbReference>
<dbReference type="Pfam" id="PF02866">
    <property type="entry name" value="Ldh_1_C"/>
    <property type="match status" value="1"/>
</dbReference>
<dbReference type="Pfam" id="PF00056">
    <property type="entry name" value="Ldh_1_N"/>
    <property type="match status" value="1"/>
</dbReference>
<dbReference type="PIRSF" id="PIRSF000102">
    <property type="entry name" value="Lac_mal_DH"/>
    <property type="match status" value="1"/>
</dbReference>
<dbReference type="PRINTS" id="PR00086">
    <property type="entry name" value="LLDHDRGNASE"/>
</dbReference>
<dbReference type="SUPFAM" id="SSF56327">
    <property type="entry name" value="LDH C-terminal domain-like"/>
    <property type="match status" value="1"/>
</dbReference>
<dbReference type="SUPFAM" id="SSF51735">
    <property type="entry name" value="NAD(P)-binding Rossmann-fold domains"/>
    <property type="match status" value="1"/>
</dbReference>